<evidence type="ECO:0000250" key="1"/>
<evidence type="ECO:0000250" key="2">
    <source>
        <dbReference type="UniProtKB" id="P00897"/>
    </source>
</evidence>
<evidence type="ECO:0000305" key="3"/>
<organism>
    <name type="scientific">Acetivibrio thermocellus</name>
    <name type="common">Hungateiclostridium thermocellum</name>
    <name type="synonym">Clostridium thermocellum</name>
    <dbReference type="NCBI Taxonomy" id="1515"/>
    <lineage>
        <taxon>Bacteria</taxon>
        <taxon>Bacillati</taxon>
        <taxon>Bacillota</taxon>
        <taxon>Clostridia</taxon>
        <taxon>Eubacteriales</taxon>
        <taxon>Oscillospiraceae</taxon>
        <taxon>Acetivibrio</taxon>
    </lineage>
</organism>
<accession>P14953</accession>
<feature type="chain" id="PRO_0000154090" description="Anthranilate synthase component 1">
    <location>
        <begin position="1"/>
        <end position="494"/>
    </location>
</feature>
<feature type="binding site" evidence="2">
    <location>
        <position position="50"/>
    </location>
    <ligand>
        <name>L-tryptophan</name>
        <dbReference type="ChEBI" id="CHEBI:57912"/>
    </ligand>
</feature>
<feature type="binding site" evidence="2">
    <location>
        <begin position="276"/>
        <end position="278"/>
    </location>
    <ligand>
        <name>L-tryptophan</name>
        <dbReference type="ChEBI" id="CHEBI:57912"/>
    </ligand>
</feature>
<feature type="binding site" evidence="2">
    <location>
        <begin position="311"/>
        <end position="312"/>
    </location>
    <ligand>
        <name>chorismate</name>
        <dbReference type="ChEBI" id="CHEBI:29748"/>
    </ligand>
</feature>
<feature type="binding site" evidence="2">
    <location>
        <position position="338"/>
    </location>
    <ligand>
        <name>Mg(2+)</name>
        <dbReference type="ChEBI" id="CHEBI:18420"/>
    </ligand>
</feature>
<feature type="binding site" evidence="2">
    <location>
        <position position="426"/>
    </location>
    <ligand>
        <name>chorismate</name>
        <dbReference type="ChEBI" id="CHEBI:29748"/>
    </ligand>
</feature>
<feature type="binding site" evidence="2">
    <location>
        <position position="446"/>
    </location>
    <ligand>
        <name>chorismate</name>
        <dbReference type="ChEBI" id="CHEBI:29748"/>
    </ligand>
</feature>
<feature type="binding site" evidence="2">
    <location>
        <begin position="460"/>
        <end position="462"/>
    </location>
    <ligand>
        <name>chorismate</name>
        <dbReference type="ChEBI" id="CHEBI:29748"/>
    </ligand>
</feature>
<feature type="binding site" evidence="2">
    <location>
        <position position="462"/>
    </location>
    <ligand>
        <name>chorismate</name>
        <dbReference type="ChEBI" id="CHEBI:29748"/>
    </ligand>
</feature>
<feature type="binding site" evidence="2">
    <location>
        <position position="475"/>
    </location>
    <ligand>
        <name>Mg(2+)</name>
        <dbReference type="ChEBI" id="CHEBI:18420"/>
    </ligand>
</feature>
<reference key="1">
    <citation type="journal article" date="1989" name="J. Biochem.">
        <title>Molecular cloning and the nucleotide sequence of the Clostridium thermocellum trpE gene.</title>
        <authorList>
            <person name="Sato S."/>
            <person name="Nakada Y."/>
            <person name="Hon-Nami K."/>
            <person name="Yasui K."/>
            <person name="Shiratsuchi A."/>
        </authorList>
    </citation>
    <scope>NUCLEOTIDE SEQUENCE [GENOMIC DNA]</scope>
</reference>
<proteinExistence type="inferred from homology"/>
<sequence length="494" mass="56020">MFYPTLDEVKIMAKDYNIIPVTMEVYADMETPISLFKRFEESSCCFLLESVEGGEKWARYSIIGKNPFLVVESYKNKTIIRERNGSQREVEGNPVEIIKGIMGKFKGANLPNLPRFNGGAVGYFGYDLIRHYENLPNVPEDDMGLPECHFMFTDEVLVYDHLKQKIHIIVNLHVNGNIERAYISAVDRIKTIHREILDTRWKTADNSVLSYNKKKNELAVTSNISKEDFCRNVLKAKQYIRDGDIFQVVLSQRLCVETNENPFNIYRALRVINPSPYMYYLKFGGYRIIGSSPEMLVRVENGIVETCPIAGTRKRGRTKEEDEALEKELLSDEKEIAEHVMLVDLGRNDIGRVSKFGTVAVKNLMHIERYSHVMHVVTNVQGEIREDKTPFDALMSILPAGTLSGAPKVRAMEIIDELETVKRGPYGGAIGYLSFNGNLDSCITIRTIILKDGKAYVQAGAGIVADSVPEREYEECYNKAMALLKAIEEAGEIR</sequence>
<comment type="function">
    <text evidence="1">Part of a heterotetrameric complex that catalyzes the two-step biosynthesis of anthranilate, an intermediate in the biosynthesis of L-tryptophan. In the first step, the glutamine-binding beta subunit (TrpG) of anthranilate synthase (AS) provides the glutamine amidotransferase activity which generates ammonia as a substrate that, along with chorismate, is used in the second step, catalyzed by the large alpha subunit of AS (TrpE) to produce anthranilate. In the absence of TrpG, TrpE can synthesize anthranilate directly from chorismate and high concentrations of ammonia (By similarity).</text>
</comment>
<comment type="catalytic activity">
    <reaction>
        <text>chorismate + L-glutamine = anthranilate + pyruvate + L-glutamate + H(+)</text>
        <dbReference type="Rhea" id="RHEA:21732"/>
        <dbReference type="ChEBI" id="CHEBI:15361"/>
        <dbReference type="ChEBI" id="CHEBI:15378"/>
        <dbReference type="ChEBI" id="CHEBI:16567"/>
        <dbReference type="ChEBI" id="CHEBI:29748"/>
        <dbReference type="ChEBI" id="CHEBI:29985"/>
        <dbReference type="ChEBI" id="CHEBI:58359"/>
        <dbReference type="EC" id="4.1.3.27"/>
    </reaction>
</comment>
<comment type="cofactor">
    <cofactor evidence="2">
        <name>Mg(2+)</name>
        <dbReference type="ChEBI" id="CHEBI:18420"/>
    </cofactor>
    <text evidence="2">Binds 1 Mg(2+) ion per subunit.</text>
</comment>
<comment type="activity regulation">
    <text evidence="1">Feedback inhibited by tryptophan.</text>
</comment>
<comment type="pathway">
    <text>Amino-acid biosynthesis; L-tryptophan biosynthesis; L-tryptophan from chorismate: step 1/5.</text>
</comment>
<comment type="subunit">
    <text evidence="1">Heterotetramer consisting of two non-identical subunits: a beta subunit (TrpG) and a large alpha subunit (TrpE).</text>
</comment>
<comment type="similarity">
    <text evidence="3">Belongs to the anthranilate synthase component I family.</text>
</comment>
<keyword id="KW-0028">Amino-acid biosynthesis</keyword>
<keyword id="KW-0057">Aromatic amino acid biosynthesis</keyword>
<keyword id="KW-0456">Lyase</keyword>
<keyword id="KW-0460">Magnesium</keyword>
<keyword id="KW-0479">Metal-binding</keyword>
<keyword id="KW-0822">Tryptophan biosynthesis</keyword>
<name>TRPE_ACETH</name>
<gene>
    <name type="primary">trpE</name>
</gene>
<dbReference type="EC" id="4.1.3.27"/>
<dbReference type="EMBL" id="D00399">
    <property type="protein sequence ID" value="BAA00300.1"/>
    <property type="molecule type" value="Genomic_DNA"/>
</dbReference>
<dbReference type="PIR" id="JX0065">
    <property type="entry name" value="JX0065"/>
</dbReference>
<dbReference type="RefSeq" id="WP_003517208.1">
    <property type="nucleotide sequence ID" value="NZ_OCMV01000002.1"/>
</dbReference>
<dbReference type="SMR" id="P14953"/>
<dbReference type="GeneID" id="35803219"/>
<dbReference type="OMA" id="GCVGYLD"/>
<dbReference type="UniPathway" id="UPA00035">
    <property type="reaction ID" value="UER00040"/>
</dbReference>
<dbReference type="GO" id="GO:0004049">
    <property type="term" value="F:anthranilate synthase activity"/>
    <property type="evidence" value="ECO:0007669"/>
    <property type="project" value="UniProtKB-EC"/>
</dbReference>
<dbReference type="GO" id="GO:0046872">
    <property type="term" value="F:metal ion binding"/>
    <property type="evidence" value="ECO:0007669"/>
    <property type="project" value="UniProtKB-KW"/>
</dbReference>
<dbReference type="GO" id="GO:0000162">
    <property type="term" value="P:L-tryptophan biosynthetic process"/>
    <property type="evidence" value="ECO:0007669"/>
    <property type="project" value="UniProtKB-UniPathway"/>
</dbReference>
<dbReference type="Gene3D" id="3.60.120.10">
    <property type="entry name" value="Anthranilate synthase"/>
    <property type="match status" value="1"/>
</dbReference>
<dbReference type="InterPro" id="IPR005801">
    <property type="entry name" value="ADC_synthase"/>
</dbReference>
<dbReference type="InterPro" id="IPR019999">
    <property type="entry name" value="Anth_synth_I-like"/>
</dbReference>
<dbReference type="InterPro" id="IPR006805">
    <property type="entry name" value="Anth_synth_I_N"/>
</dbReference>
<dbReference type="InterPro" id="IPR005256">
    <property type="entry name" value="Anth_synth_I_PabB"/>
</dbReference>
<dbReference type="InterPro" id="IPR015890">
    <property type="entry name" value="Chorismate_C"/>
</dbReference>
<dbReference type="NCBIfam" id="TIGR00564">
    <property type="entry name" value="trpE_most"/>
    <property type="match status" value="1"/>
</dbReference>
<dbReference type="PANTHER" id="PTHR11236">
    <property type="entry name" value="AMINOBENZOATE/ANTHRANILATE SYNTHASE"/>
    <property type="match status" value="1"/>
</dbReference>
<dbReference type="PANTHER" id="PTHR11236:SF48">
    <property type="entry name" value="ISOCHORISMATE SYNTHASE MENF"/>
    <property type="match status" value="1"/>
</dbReference>
<dbReference type="Pfam" id="PF04715">
    <property type="entry name" value="Anth_synt_I_N"/>
    <property type="match status" value="1"/>
</dbReference>
<dbReference type="Pfam" id="PF00425">
    <property type="entry name" value="Chorismate_bind"/>
    <property type="match status" value="1"/>
</dbReference>
<dbReference type="PRINTS" id="PR00095">
    <property type="entry name" value="ANTSNTHASEI"/>
</dbReference>
<dbReference type="SUPFAM" id="SSF56322">
    <property type="entry name" value="ADC synthase"/>
    <property type="match status" value="1"/>
</dbReference>
<protein>
    <recommendedName>
        <fullName>Anthranilate synthase component 1</fullName>
        <shortName>AS</shortName>
        <shortName>ASI</shortName>
        <ecNumber>4.1.3.27</ecNumber>
    </recommendedName>
</protein>